<proteinExistence type="evidence at protein level"/>
<sequence>MIDIHCHILPAMDDGAGDSADSIEMARAAVRQGIRTIIATPHHNNGVYKNEPAAVREAADQLNKRLIKEDIPLHVLPGQEIRIYGEVEQDLAKRQLLSLNDTKYILIEFPFDHVPRYAEQLFYDLQLKGYIPVIAHPERNREIRENPSLLYHLVEKGAASQITSGSLAGIFGKQLKAFSLRLVEANLIHFVASDAHNVKTRNFHTQEALYVLEKEFGSELPYMLTENAELLLRNQTIFRQPPQPVKRRKLFGFF</sequence>
<name>YWQE_BACSU</name>
<dbReference type="EC" id="3.1.3.48"/>
<dbReference type="EMBL" id="Z92952">
    <property type="protein sequence ID" value="CAB07456.1"/>
    <property type="molecule type" value="Genomic_DNA"/>
</dbReference>
<dbReference type="EMBL" id="AL009126">
    <property type="protein sequence ID" value="CAB15641.1"/>
    <property type="molecule type" value="Genomic_DNA"/>
</dbReference>
<dbReference type="PIR" id="H70066">
    <property type="entry name" value="H70066"/>
</dbReference>
<dbReference type="RefSeq" id="WP_003227815.1">
    <property type="nucleotide sequence ID" value="NZ_OZ025638.1"/>
</dbReference>
<dbReference type="PDB" id="3QY6">
    <property type="method" value="X-ray"/>
    <property type="resolution" value="1.80 A"/>
    <property type="chains" value="A=1-254"/>
</dbReference>
<dbReference type="PDB" id="3QY7">
    <property type="method" value="X-ray"/>
    <property type="resolution" value="1.62 A"/>
    <property type="chains" value="A=1-254"/>
</dbReference>
<dbReference type="PDBsum" id="3QY6"/>
<dbReference type="PDBsum" id="3QY7"/>
<dbReference type="SMR" id="P96717"/>
<dbReference type="FunCoup" id="P96717">
    <property type="interactions" value="189"/>
</dbReference>
<dbReference type="IntAct" id="P96717">
    <property type="interactions" value="8"/>
</dbReference>
<dbReference type="STRING" id="224308.BSU36240"/>
<dbReference type="PaxDb" id="224308-BSU36240"/>
<dbReference type="EnsemblBacteria" id="CAB15641">
    <property type="protein sequence ID" value="CAB15641"/>
    <property type="gene ID" value="BSU_36240"/>
</dbReference>
<dbReference type="GeneID" id="936893"/>
<dbReference type="KEGG" id="bsu:BSU36240"/>
<dbReference type="PATRIC" id="fig|224308.179.peg.3922"/>
<dbReference type="eggNOG" id="COG4464">
    <property type="taxonomic scope" value="Bacteria"/>
</dbReference>
<dbReference type="InParanoid" id="P96717"/>
<dbReference type="OrthoDB" id="9788539at2"/>
<dbReference type="PhylomeDB" id="P96717"/>
<dbReference type="BioCyc" id="BSUB:BSU36240-MONOMER"/>
<dbReference type="SABIO-RK" id="P96717"/>
<dbReference type="EvolutionaryTrace" id="P96717"/>
<dbReference type="Proteomes" id="UP000001570">
    <property type="component" value="Chromosome"/>
</dbReference>
<dbReference type="GO" id="GO:0030145">
    <property type="term" value="F:manganese ion binding"/>
    <property type="evidence" value="ECO:0007669"/>
    <property type="project" value="InterPro"/>
</dbReference>
<dbReference type="GO" id="GO:0004725">
    <property type="term" value="F:protein tyrosine phosphatase activity"/>
    <property type="evidence" value="ECO:0007669"/>
    <property type="project" value="UniProtKB-EC"/>
</dbReference>
<dbReference type="Gene3D" id="3.20.20.140">
    <property type="entry name" value="Metal-dependent hydrolases"/>
    <property type="match status" value="1"/>
</dbReference>
<dbReference type="InterPro" id="IPR016667">
    <property type="entry name" value="Caps_polysacc_synth_CpsB/CapC"/>
</dbReference>
<dbReference type="InterPro" id="IPR016195">
    <property type="entry name" value="Pol/histidinol_Pase-like"/>
</dbReference>
<dbReference type="PANTHER" id="PTHR39181">
    <property type="entry name" value="TYROSINE-PROTEIN PHOSPHATASE YWQE"/>
    <property type="match status" value="1"/>
</dbReference>
<dbReference type="PANTHER" id="PTHR39181:SF1">
    <property type="entry name" value="TYROSINE-PROTEIN PHOSPHATASE YWQE"/>
    <property type="match status" value="1"/>
</dbReference>
<dbReference type="Pfam" id="PF19567">
    <property type="entry name" value="CpsB_CapC"/>
    <property type="match status" value="1"/>
</dbReference>
<dbReference type="PIRSF" id="PIRSF016557">
    <property type="entry name" value="Caps_synth_CpsB"/>
    <property type="match status" value="1"/>
</dbReference>
<dbReference type="SUPFAM" id="SSF89550">
    <property type="entry name" value="PHP domain-like"/>
    <property type="match status" value="1"/>
</dbReference>
<reference key="1">
    <citation type="journal article" date="1997" name="Microbiology">
        <title>The Bacillus subtilis genome from gerBC (311 degrees) to licR (334 degrees).</title>
        <authorList>
            <person name="Presecan E."/>
            <person name="Moszer I."/>
            <person name="Boursier L."/>
            <person name="Cruz Ramos H."/>
            <person name="De La Fuente V."/>
            <person name="Hullo M.-F."/>
            <person name="Lelong C."/>
            <person name="Schleich S."/>
            <person name="Sekowska A."/>
            <person name="Song B.H."/>
            <person name="Villani G."/>
            <person name="Kunst F."/>
            <person name="Danchin A."/>
            <person name="Glaser P."/>
        </authorList>
    </citation>
    <scope>NUCLEOTIDE SEQUENCE [GENOMIC DNA]</scope>
    <source>
        <strain>168</strain>
    </source>
</reference>
<reference key="2">
    <citation type="journal article" date="1997" name="Nature">
        <title>The complete genome sequence of the Gram-positive bacterium Bacillus subtilis.</title>
        <authorList>
            <person name="Kunst F."/>
            <person name="Ogasawara N."/>
            <person name="Moszer I."/>
            <person name="Albertini A.M."/>
            <person name="Alloni G."/>
            <person name="Azevedo V."/>
            <person name="Bertero M.G."/>
            <person name="Bessieres P."/>
            <person name="Bolotin A."/>
            <person name="Borchert S."/>
            <person name="Borriss R."/>
            <person name="Boursier L."/>
            <person name="Brans A."/>
            <person name="Braun M."/>
            <person name="Brignell S.C."/>
            <person name="Bron S."/>
            <person name="Brouillet S."/>
            <person name="Bruschi C.V."/>
            <person name="Caldwell B."/>
            <person name="Capuano V."/>
            <person name="Carter N.M."/>
            <person name="Choi S.-K."/>
            <person name="Codani J.-J."/>
            <person name="Connerton I.F."/>
            <person name="Cummings N.J."/>
            <person name="Daniel R.A."/>
            <person name="Denizot F."/>
            <person name="Devine K.M."/>
            <person name="Duesterhoeft A."/>
            <person name="Ehrlich S.D."/>
            <person name="Emmerson P.T."/>
            <person name="Entian K.-D."/>
            <person name="Errington J."/>
            <person name="Fabret C."/>
            <person name="Ferrari E."/>
            <person name="Foulger D."/>
            <person name="Fritz C."/>
            <person name="Fujita M."/>
            <person name="Fujita Y."/>
            <person name="Fuma S."/>
            <person name="Galizzi A."/>
            <person name="Galleron N."/>
            <person name="Ghim S.-Y."/>
            <person name="Glaser P."/>
            <person name="Goffeau A."/>
            <person name="Golightly E.J."/>
            <person name="Grandi G."/>
            <person name="Guiseppi G."/>
            <person name="Guy B.J."/>
            <person name="Haga K."/>
            <person name="Haiech J."/>
            <person name="Harwood C.R."/>
            <person name="Henaut A."/>
            <person name="Hilbert H."/>
            <person name="Holsappel S."/>
            <person name="Hosono S."/>
            <person name="Hullo M.-F."/>
            <person name="Itaya M."/>
            <person name="Jones L.-M."/>
            <person name="Joris B."/>
            <person name="Karamata D."/>
            <person name="Kasahara Y."/>
            <person name="Klaerr-Blanchard M."/>
            <person name="Klein C."/>
            <person name="Kobayashi Y."/>
            <person name="Koetter P."/>
            <person name="Koningstein G."/>
            <person name="Krogh S."/>
            <person name="Kumano M."/>
            <person name="Kurita K."/>
            <person name="Lapidus A."/>
            <person name="Lardinois S."/>
            <person name="Lauber J."/>
            <person name="Lazarevic V."/>
            <person name="Lee S.-M."/>
            <person name="Levine A."/>
            <person name="Liu H."/>
            <person name="Masuda S."/>
            <person name="Mauel C."/>
            <person name="Medigue C."/>
            <person name="Medina N."/>
            <person name="Mellado R.P."/>
            <person name="Mizuno M."/>
            <person name="Moestl D."/>
            <person name="Nakai S."/>
            <person name="Noback M."/>
            <person name="Noone D."/>
            <person name="O'Reilly M."/>
            <person name="Ogawa K."/>
            <person name="Ogiwara A."/>
            <person name="Oudega B."/>
            <person name="Park S.-H."/>
            <person name="Parro V."/>
            <person name="Pohl T.M."/>
            <person name="Portetelle D."/>
            <person name="Porwollik S."/>
            <person name="Prescott A.M."/>
            <person name="Presecan E."/>
            <person name="Pujic P."/>
            <person name="Purnelle B."/>
            <person name="Rapoport G."/>
            <person name="Rey M."/>
            <person name="Reynolds S."/>
            <person name="Rieger M."/>
            <person name="Rivolta C."/>
            <person name="Rocha E."/>
            <person name="Roche B."/>
            <person name="Rose M."/>
            <person name="Sadaie Y."/>
            <person name="Sato T."/>
            <person name="Scanlan E."/>
            <person name="Schleich S."/>
            <person name="Schroeter R."/>
            <person name="Scoffone F."/>
            <person name="Sekiguchi J."/>
            <person name="Sekowska A."/>
            <person name="Seror S.J."/>
            <person name="Serror P."/>
            <person name="Shin B.-S."/>
            <person name="Soldo B."/>
            <person name="Sorokin A."/>
            <person name="Tacconi E."/>
            <person name="Takagi T."/>
            <person name="Takahashi H."/>
            <person name="Takemaru K."/>
            <person name="Takeuchi M."/>
            <person name="Tamakoshi A."/>
            <person name="Tanaka T."/>
            <person name="Terpstra P."/>
            <person name="Tognoni A."/>
            <person name="Tosato V."/>
            <person name="Uchiyama S."/>
            <person name="Vandenbol M."/>
            <person name="Vannier F."/>
            <person name="Vassarotti A."/>
            <person name="Viari A."/>
            <person name="Wambutt R."/>
            <person name="Wedler E."/>
            <person name="Wedler H."/>
            <person name="Weitzenegger T."/>
            <person name="Winters P."/>
            <person name="Wipat A."/>
            <person name="Yamamoto H."/>
            <person name="Yamane K."/>
            <person name="Yasumoto K."/>
            <person name="Yata K."/>
            <person name="Yoshida K."/>
            <person name="Yoshikawa H.-F."/>
            <person name="Zumstein E."/>
            <person name="Yoshikawa H."/>
            <person name="Danchin A."/>
        </authorList>
    </citation>
    <scope>NUCLEOTIDE SEQUENCE [LARGE SCALE GENOMIC DNA]</scope>
    <source>
        <strain>168</strain>
    </source>
</reference>
<reference key="3">
    <citation type="journal article" date="2005" name="J. Bacteriol.">
        <title>In vitro characterization of the Bacillus subtilis protein tyrosine phosphatase YwqE.</title>
        <authorList>
            <person name="Mijakovic I."/>
            <person name="Musumeci L."/>
            <person name="Tautz L."/>
            <person name="Petranovic D."/>
            <person name="Edwards R.A."/>
            <person name="Jensen P.R."/>
            <person name="Mustelin T."/>
            <person name="Deutscher J."/>
            <person name="Bottini N."/>
        </authorList>
    </citation>
    <scope>CHARACTERIZATION</scope>
    <scope>MUTAGENESIS OF ASP-3; HIS-5; HIS-42; HIS-136; ASP-194 AND HIS-196</scope>
</reference>
<reference key="4">
    <citation type="journal article" date="2006" name="Nucleic Acids Res.">
        <title>Bacterial single-stranded DNA-binding proteins are phosphorylated on tyrosine.</title>
        <authorList>
            <person name="Mijakovic I."/>
            <person name="Petranovic D."/>
            <person name="Macek B."/>
            <person name="Cepo T."/>
            <person name="Mann M."/>
            <person name="Davies J."/>
            <person name="Jensen P.R."/>
            <person name="Vujaklija D."/>
        </authorList>
    </citation>
    <scope>FUNCTION</scope>
</reference>
<evidence type="ECO:0000269" key="1">
    <source>
    </source>
</evidence>
<evidence type="ECO:0000269" key="2">
    <source>
    </source>
</evidence>
<evidence type="ECO:0000305" key="3"/>
<evidence type="ECO:0007829" key="4">
    <source>
        <dbReference type="PDB" id="3QY7"/>
    </source>
</evidence>
<comment type="function">
    <text evidence="2">Dephosphorylates the phosphotyrosine-containing proteins YwqD, YwqF and Ssb.</text>
</comment>
<comment type="catalytic activity">
    <reaction>
        <text>O-phospho-L-tyrosyl-[protein] + H2O = L-tyrosyl-[protein] + phosphate</text>
        <dbReference type="Rhea" id="RHEA:10684"/>
        <dbReference type="Rhea" id="RHEA-COMP:10136"/>
        <dbReference type="Rhea" id="RHEA-COMP:20101"/>
        <dbReference type="ChEBI" id="CHEBI:15377"/>
        <dbReference type="ChEBI" id="CHEBI:43474"/>
        <dbReference type="ChEBI" id="CHEBI:46858"/>
        <dbReference type="ChEBI" id="CHEBI:61978"/>
        <dbReference type="EC" id="3.1.3.48"/>
    </reaction>
</comment>
<comment type="cofactor">
    <cofactor>
        <name>Mn(2+)</name>
        <dbReference type="ChEBI" id="CHEBI:29035"/>
    </cofactor>
</comment>
<comment type="activity regulation">
    <text>Inhibited by vanadate and sodium pyrophosphate. Not inhibited by sodium fluoride.</text>
</comment>
<comment type="biophysicochemical properties">
    <phDependence>
        <text>Optimally active at alkaline pHs. Activity increases with increasing pHs.</text>
    </phDependence>
</comment>
<comment type="similarity">
    <text evidence="3">Belongs to the metallo-dependent hydrolases superfamily. CpsB/CapC family.</text>
</comment>
<gene>
    <name type="primary">ywqE</name>
    <name type="ordered locus">BSU36240</name>
</gene>
<protein>
    <recommendedName>
        <fullName>Tyrosine-protein phosphatase YwqE</fullName>
        <ecNumber>3.1.3.48</ecNumber>
    </recommendedName>
</protein>
<feature type="chain" id="PRO_0000057893" description="Tyrosine-protein phosphatase YwqE">
    <location>
        <begin position="1"/>
        <end position="254"/>
    </location>
</feature>
<feature type="mutagenesis site" description="Large decrease in activity." evidence="1">
    <original>D</original>
    <variation>A</variation>
    <location>
        <position position="3"/>
    </location>
</feature>
<feature type="mutagenesis site" description="Large decrease in activity." evidence="1">
    <original>H</original>
    <variation>A</variation>
    <location>
        <position position="5"/>
    </location>
</feature>
<feature type="mutagenesis site" description="Large decrease in activity.">
    <original>H</original>
    <variation>A</variation>
    <location>
        <position position="7"/>
    </location>
</feature>
<feature type="mutagenesis site" description="Large decrease in activity." evidence="1">
    <original>H</original>
    <variation>A</variation>
    <location>
        <position position="42"/>
    </location>
</feature>
<feature type="mutagenesis site" description="Large decrease in activity." evidence="1">
    <original>H</original>
    <variation>A</variation>
    <location>
        <position position="136"/>
    </location>
</feature>
<feature type="mutagenesis site" description="Large decrease in activity." evidence="1">
    <original>D</original>
    <variation>A</variation>
    <location>
        <position position="194"/>
    </location>
</feature>
<feature type="mutagenesis site" description="Large decrease in activity." evidence="1">
    <original>H</original>
    <variation>A</variation>
    <location>
        <position position="196"/>
    </location>
</feature>
<feature type="strand" evidence="4">
    <location>
        <begin position="2"/>
        <end position="6"/>
    </location>
</feature>
<feature type="strand" evidence="4">
    <location>
        <begin position="12"/>
        <end position="15"/>
    </location>
</feature>
<feature type="helix" evidence="4">
    <location>
        <begin position="19"/>
        <end position="31"/>
    </location>
</feature>
<feature type="strand" evidence="4">
    <location>
        <begin position="36"/>
        <end position="38"/>
    </location>
</feature>
<feature type="strand" evidence="4">
    <location>
        <begin position="42"/>
        <end position="45"/>
    </location>
</feature>
<feature type="helix" evidence="4">
    <location>
        <begin position="52"/>
        <end position="68"/>
    </location>
</feature>
<feature type="strand" evidence="4">
    <location>
        <begin position="74"/>
        <end position="76"/>
    </location>
</feature>
<feature type="strand" evidence="4">
    <location>
        <begin position="80"/>
        <end position="82"/>
    </location>
</feature>
<feature type="helix" evidence="4">
    <location>
        <begin position="87"/>
        <end position="92"/>
    </location>
</feature>
<feature type="helix" evidence="4">
    <location>
        <begin position="99"/>
        <end position="101"/>
    </location>
</feature>
<feature type="strand" evidence="4">
    <location>
        <begin position="102"/>
        <end position="108"/>
    </location>
</feature>
<feature type="helix" evidence="4">
    <location>
        <begin position="118"/>
        <end position="127"/>
    </location>
</feature>
<feature type="strand" evidence="4">
    <location>
        <begin position="131"/>
        <end position="135"/>
    </location>
</feature>
<feature type="helix" evidence="4">
    <location>
        <begin position="137"/>
        <end position="139"/>
    </location>
</feature>
<feature type="helix" evidence="4">
    <location>
        <begin position="141"/>
        <end position="145"/>
    </location>
</feature>
<feature type="helix" evidence="4">
    <location>
        <begin position="148"/>
        <end position="155"/>
    </location>
</feature>
<feature type="strand" evidence="4">
    <location>
        <begin position="159"/>
        <end position="163"/>
    </location>
</feature>
<feature type="helix" evidence="4">
    <location>
        <begin position="164"/>
        <end position="168"/>
    </location>
</feature>
<feature type="turn" evidence="4">
    <location>
        <begin position="169"/>
        <end position="171"/>
    </location>
</feature>
<feature type="helix" evidence="4">
    <location>
        <begin position="173"/>
        <end position="184"/>
    </location>
</feature>
<feature type="strand" evidence="4">
    <location>
        <begin position="190"/>
        <end position="192"/>
    </location>
</feature>
<feature type="strand" evidence="4">
    <location>
        <begin position="197"/>
        <end position="201"/>
    </location>
</feature>
<feature type="helix" evidence="4">
    <location>
        <begin position="205"/>
        <end position="216"/>
    </location>
</feature>
<feature type="helix" evidence="4">
    <location>
        <begin position="219"/>
        <end position="232"/>
    </location>
</feature>
<organism>
    <name type="scientific">Bacillus subtilis (strain 168)</name>
    <dbReference type="NCBI Taxonomy" id="224308"/>
    <lineage>
        <taxon>Bacteria</taxon>
        <taxon>Bacillati</taxon>
        <taxon>Bacillota</taxon>
        <taxon>Bacilli</taxon>
        <taxon>Bacillales</taxon>
        <taxon>Bacillaceae</taxon>
        <taxon>Bacillus</taxon>
    </lineage>
</organism>
<accession>P96717</accession>
<keyword id="KW-0002">3D-structure</keyword>
<keyword id="KW-0378">Hydrolase</keyword>
<keyword id="KW-0464">Manganese</keyword>
<keyword id="KW-0904">Protein phosphatase</keyword>
<keyword id="KW-1185">Reference proteome</keyword>